<sequence length="157" mass="18166">MAKHSDPNSKLIAENRRARFDYFIEEEIEAGIMLLGSEVKSLRQGGSNIGESYASVEEGELWLINGYIAPYLQAKTWGHEERRKRKLLVSRRELARLWTATAREGMTIVPIRMYFNDRGIVKLKIGIAKGKKLSDKRETSAKRDWSREKQRLLKQNS</sequence>
<gene>
    <name evidence="1" type="primary">smpB</name>
    <name type="ordered locus">Rsph17029_2543</name>
</gene>
<accession>A3PMS9</accession>
<name>SSRP_CERS1</name>
<keyword id="KW-0963">Cytoplasm</keyword>
<keyword id="KW-0694">RNA-binding</keyword>
<evidence type="ECO:0000255" key="1">
    <source>
        <dbReference type="HAMAP-Rule" id="MF_00023"/>
    </source>
</evidence>
<evidence type="ECO:0000256" key="2">
    <source>
        <dbReference type="SAM" id="MobiDB-lite"/>
    </source>
</evidence>
<reference key="1">
    <citation type="submission" date="2007-02" db="EMBL/GenBank/DDBJ databases">
        <title>Complete sequence of chromosome 1 of Rhodobacter sphaeroides ATCC 17029.</title>
        <authorList>
            <person name="Copeland A."/>
            <person name="Lucas S."/>
            <person name="Lapidus A."/>
            <person name="Barry K."/>
            <person name="Detter J.C."/>
            <person name="Glavina del Rio T."/>
            <person name="Hammon N."/>
            <person name="Israni S."/>
            <person name="Dalin E."/>
            <person name="Tice H."/>
            <person name="Pitluck S."/>
            <person name="Kiss H."/>
            <person name="Brettin T."/>
            <person name="Bruce D."/>
            <person name="Han C."/>
            <person name="Tapia R."/>
            <person name="Gilna P."/>
            <person name="Schmutz J."/>
            <person name="Larimer F."/>
            <person name="Land M."/>
            <person name="Hauser L."/>
            <person name="Kyrpides N."/>
            <person name="Mikhailova N."/>
            <person name="Richardson P."/>
            <person name="Mackenzie C."/>
            <person name="Choudhary M."/>
            <person name="Donohue T.J."/>
            <person name="Kaplan S."/>
        </authorList>
    </citation>
    <scope>NUCLEOTIDE SEQUENCE [LARGE SCALE GENOMIC DNA]</scope>
    <source>
        <strain>ATCC 17029 / ATH 2.4.9</strain>
    </source>
</reference>
<protein>
    <recommendedName>
        <fullName evidence="1">SsrA-binding protein</fullName>
    </recommendedName>
    <alternativeName>
        <fullName evidence="1">Small protein B</fullName>
    </alternativeName>
</protein>
<proteinExistence type="inferred from homology"/>
<comment type="function">
    <text evidence="1">Required for rescue of stalled ribosomes mediated by trans-translation. Binds to transfer-messenger RNA (tmRNA), required for stable association of tmRNA with ribosomes. tmRNA and SmpB together mimic tRNA shape, replacing the anticodon stem-loop with SmpB. tmRNA is encoded by the ssrA gene; the 2 termini fold to resemble tRNA(Ala) and it encodes a 'tag peptide', a short internal open reading frame. During trans-translation Ala-aminoacylated tmRNA acts like a tRNA, entering the A-site of stalled ribosomes, displacing the stalled mRNA. The ribosome then switches to translate the ORF on the tmRNA; the nascent peptide is terminated with the 'tag peptide' encoded by the tmRNA and targeted for degradation. The ribosome is freed to recommence translation, which seems to be the essential function of trans-translation.</text>
</comment>
<comment type="subcellular location">
    <subcellularLocation>
        <location evidence="1">Cytoplasm</location>
    </subcellularLocation>
    <text evidence="1">The tmRNA-SmpB complex associates with stalled 70S ribosomes.</text>
</comment>
<comment type="similarity">
    <text evidence="1">Belongs to the SmpB family.</text>
</comment>
<dbReference type="EMBL" id="CP000577">
    <property type="protein sequence ID" value="ABN77645.1"/>
    <property type="molecule type" value="Genomic_DNA"/>
</dbReference>
<dbReference type="RefSeq" id="WP_002721091.1">
    <property type="nucleotide sequence ID" value="NC_009049.1"/>
</dbReference>
<dbReference type="SMR" id="A3PMS9"/>
<dbReference type="GeneID" id="67447639"/>
<dbReference type="KEGG" id="rsh:Rsph17029_2543"/>
<dbReference type="HOGENOM" id="CLU_108953_0_1_5"/>
<dbReference type="GO" id="GO:0005829">
    <property type="term" value="C:cytosol"/>
    <property type="evidence" value="ECO:0007669"/>
    <property type="project" value="TreeGrafter"/>
</dbReference>
<dbReference type="GO" id="GO:0003723">
    <property type="term" value="F:RNA binding"/>
    <property type="evidence" value="ECO:0007669"/>
    <property type="project" value="UniProtKB-UniRule"/>
</dbReference>
<dbReference type="GO" id="GO:0070929">
    <property type="term" value="P:trans-translation"/>
    <property type="evidence" value="ECO:0007669"/>
    <property type="project" value="UniProtKB-UniRule"/>
</dbReference>
<dbReference type="CDD" id="cd09294">
    <property type="entry name" value="SmpB"/>
    <property type="match status" value="1"/>
</dbReference>
<dbReference type="Gene3D" id="2.40.280.10">
    <property type="match status" value="1"/>
</dbReference>
<dbReference type="HAMAP" id="MF_00023">
    <property type="entry name" value="SmpB"/>
    <property type="match status" value="1"/>
</dbReference>
<dbReference type="InterPro" id="IPR023620">
    <property type="entry name" value="SmpB"/>
</dbReference>
<dbReference type="InterPro" id="IPR000037">
    <property type="entry name" value="SsrA-bd_prot"/>
</dbReference>
<dbReference type="InterPro" id="IPR020081">
    <property type="entry name" value="SsrA-bd_prot_CS"/>
</dbReference>
<dbReference type="NCBIfam" id="NF003843">
    <property type="entry name" value="PRK05422.1"/>
    <property type="match status" value="1"/>
</dbReference>
<dbReference type="NCBIfam" id="TIGR00086">
    <property type="entry name" value="smpB"/>
    <property type="match status" value="1"/>
</dbReference>
<dbReference type="PANTHER" id="PTHR30308:SF2">
    <property type="entry name" value="SSRA-BINDING PROTEIN"/>
    <property type="match status" value="1"/>
</dbReference>
<dbReference type="PANTHER" id="PTHR30308">
    <property type="entry name" value="TMRNA-BINDING COMPONENT OF TRANS-TRANSLATION TAGGING COMPLEX"/>
    <property type="match status" value="1"/>
</dbReference>
<dbReference type="Pfam" id="PF01668">
    <property type="entry name" value="SmpB"/>
    <property type="match status" value="1"/>
</dbReference>
<dbReference type="SUPFAM" id="SSF74982">
    <property type="entry name" value="Small protein B (SmpB)"/>
    <property type="match status" value="1"/>
</dbReference>
<dbReference type="PROSITE" id="PS01317">
    <property type="entry name" value="SSRP"/>
    <property type="match status" value="1"/>
</dbReference>
<feature type="chain" id="PRO_0000331086" description="SsrA-binding protein">
    <location>
        <begin position="1"/>
        <end position="157"/>
    </location>
</feature>
<feature type="region of interest" description="Disordered" evidence="2">
    <location>
        <begin position="136"/>
        <end position="157"/>
    </location>
</feature>
<feature type="compositionally biased region" description="Basic and acidic residues" evidence="2">
    <location>
        <begin position="136"/>
        <end position="151"/>
    </location>
</feature>
<organism>
    <name type="scientific">Cereibacter sphaeroides (strain ATCC 17029 / ATH 2.4.9)</name>
    <name type="common">Rhodobacter sphaeroides</name>
    <dbReference type="NCBI Taxonomy" id="349101"/>
    <lineage>
        <taxon>Bacteria</taxon>
        <taxon>Pseudomonadati</taxon>
        <taxon>Pseudomonadota</taxon>
        <taxon>Alphaproteobacteria</taxon>
        <taxon>Rhodobacterales</taxon>
        <taxon>Paracoccaceae</taxon>
        <taxon>Cereibacter</taxon>
    </lineage>
</organism>